<keyword id="KW-0325">Glycoprotein</keyword>
<keyword id="KW-1038">Host endoplasmic reticulum</keyword>
<keyword id="KW-1040">Host Golgi apparatus</keyword>
<keyword id="KW-1043">Host membrane</keyword>
<keyword id="KW-0945">Host-virus interaction</keyword>
<keyword id="KW-0472">Membrane</keyword>
<keyword id="KW-0964">Secreted</keyword>
<keyword id="KW-0732">Signal</keyword>
<keyword id="KW-0812">Transmembrane</keyword>
<keyword id="KW-1133">Transmembrane helix</keyword>
<keyword id="KW-1161">Viral attachment to host cell</keyword>
<keyword id="KW-0261">Viral envelope protein</keyword>
<keyword id="KW-0946">Virion</keyword>
<keyword id="KW-1160">Virus entry into host cell</keyword>
<proteinExistence type="evidence at protein level"/>
<organism>
    <name type="scientific">Porcine reproductive and respiratory syndrome virus (isolate Pig/United States/SD 01-08/2001)</name>
    <name type="common">PRRSV</name>
    <dbReference type="NCBI Taxonomy" id="857306"/>
    <lineage>
        <taxon>Viruses</taxon>
        <taxon>Riboviria</taxon>
        <taxon>Orthornavirae</taxon>
        <taxon>Pisuviricota</taxon>
        <taxon>Pisoniviricetes</taxon>
        <taxon>Nidovirales</taxon>
        <taxon>Arnidovirineae</taxon>
        <taxon>Arteriviridae</taxon>
        <taxon>Variarterivirinae</taxon>
        <taxon>Betaarterivirus</taxon>
        <taxon>Ampobartevirus</taxon>
        <taxon>Betaarterivirus americense</taxon>
    </lineage>
</organism>
<dbReference type="EMBL" id="DQ489311">
    <property type="protein sequence ID" value="ABF66345.1"/>
    <property type="molecule type" value="Genomic_RNA"/>
</dbReference>
<dbReference type="GlyCosmos" id="A0MD33">
    <property type="glycosylation" value="5 sites, No reported glycans"/>
</dbReference>
<dbReference type="Proteomes" id="UP000000937">
    <property type="component" value="Genome"/>
</dbReference>
<dbReference type="GO" id="GO:0005576">
    <property type="term" value="C:extracellular region"/>
    <property type="evidence" value="ECO:0007669"/>
    <property type="project" value="UniProtKB-SubCell"/>
</dbReference>
<dbReference type="GO" id="GO:0044167">
    <property type="term" value="C:host cell endoplasmic reticulum membrane"/>
    <property type="evidence" value="ECO:0007669"/>
    <property type="project" value="UniProtKB-SubCell"/>
</dbReference>
<dbReference type="GO" id="GO:0044178">
    <property type="term" value="C:host cell Golgi membrane"/>
    <property type="evidence" value="ECO:0007669"/>
    <property type="project" value="UniProtKB-SubCell"/>
</dbReference>
<dbReference type="GO" id="GO:0016020">
    <property type="term" value="C:membrane"/>
    <property type="evidence" value="ECO:0007669"/>
    <property type="project" value="UniProtKB-KW"/>
</dbReference>
<dbReference type="GO" id="GO:0019031">
    <property type="term" value="C:viral envelope"/>
    <property type="evidence" value="ECO:0007669"/>
    <property type="project" value="UniProtKB-KW"/>
</dbReference>
<dbReference type="GO" id="GO:0055036">
    <property type="term" value="C:virion membrane"/>
    <property type="evidence" value="ECO:0007669"/>
    <property type="project" value="UniProtKB-SubCell"/>
</dbReference>
<dbReference type="GO" id="GO:0046718">
    <property type="term" value="P:symbiont entry into host cell"/>
    <property type="evidence" value="ECO:0007669"/>
    <property type="project" value="UniProtKB-KW"/>
</dbReference>
<dbReference type="GO" id="GO:0019062">
    <property type="term" value="P:virion attachment to host cell"/>
    <property type="evidence" value="ECO:0007669"/>
    <property type="project" value="UniProtKB-KW"/>
</dbReference>
<dbReference type="InterPro" id="IPR003412">
    <property type="entry name" value="Arteri_GP4"/>
</dbReference>
<dbReference type="Pfam" id="PF02497">
    <property type="entry name" value="Arteri_GP4"/>
    <property type="match status" value="1"/>
</dbReference>
<reference key="1">
    <citation type="journal article" date="2006" name="Adv. Exp. Med. Biol.">
        <title>Construction of a full-length cDNA infectious clone of a European-like Type 1 PRRSV isolated in the U.S.</title>
        <authorList>
            <person name="Fang Y."/>
            <person name="Faaberg K.S."/>
            <person name="Rowland R.R."/>
            <person name="Christopher-Hennings J."/>
            <person name="Pattnaik A.K."/>
            <person name="Osorio F."/>
            <person name="Nelson E.A."/>
        </authorList>
    </citation>
    <scope>NUCLEOTIDE SEQUENCE [GENOMIC RNA]</scope>
    <source>
        <strain>Infectious clone SD 01-08</strain>
    </source>
</reference>
<reference key="2">
    <citation type="journal article" date="2010" name="J. Virol.">
        <title>The minor envelope glycoproteins GP2a and GP4 of porcine reproductive and respiratory syndrome virus interact with the receptor CD163.</title>
        <authorList>
            <person name="Das P.B."/>
            <person name="Dinh P.X."/>
            <person name="Ansari I.H."/>
            <person name="de Lima M."/>
            <person name="Osorio F.A."/>
            <person name="Pattnaik A.K."/>
        </authorList>
    </citation>
    <scope>FUNCTION</scope>
    <scope>INTERACTION WITH PIG CD163</scope>
    <scope>INTERACTION WITH GLYCOPROTEIN 5</scope>
    <source>
        <strain>FL-12</strain>
    </source>
</reference>
<organismHost>
    <name type="scientific">Sus scrofa</name>
    <name type="common">Pig</name>
    <dbReference type="NCBI Taxonomy" id="9823"/>
</organismHost>
<gene>
    <name type="primary">GP4</name>
    <name type="ORF">4</name>
</gene>
<sequence>MAAAAFFLLVGAQHIMVSEAFACKPCFSTHLSDIKTNTTAAAGFMVLQNINCSRPHEASATQGQVPSRKSSQCREAVGVPQYITITANVTDESYLYNADLLMLSACLFYASEMSEKGFKVIFGNVSGVVSACVNFTDYVAHVTQHTQQHHLVINHIRLLHFLTPSAMRWATTIACLFAILLAI</sequence>
<name>GP4_PRRSS</name>
<comment type="function">
    <text evidence="3">Minor envelope protein. Along with GP2a, serves as the viral attachment protein responsible for mediating interactions with CD163 thereby playing a role in virus entry into susceptible host cells.</text>
</comment>
<comment type="subunit">
    <text evidence="1 3">Heterotrimer of GP2a, GP3, and GP4 (By similarity). The GP2a-GP3-GP4 complex associates with the E protein (By similarity). Interacts with glycoprotein 5. Interacts with host CD163; this interaction plays a role in virus entry into host cell.</text>
</comment>
<comment type="subcellular location">
    <subcellularLocation>
        <location evidence="1">Virion membrane</location>
        <topology evidence="1">Single-pass type I membrane protein</topology>
    </subcellularLocation>
    <subcellularLocation>
        <location evidence="1">Host endoplasmic reticulum membrane</location>
        <topology evidence="1">Single-pass type I membrane protein</topology>
    </subcellularLocation>
    <subcellularLocation>
        <location evidence="1">Host Golgi apparatus membrane</location>
        <topology evidence="1">Single-pass type I membrane protein</topology>
    </subcellularLocation>
    <subcellularLocation>
        <location evidence="1">Secreted</location>
    </subcellularLocation>
    <text evidence="1">Only a small fraction of GP4 synthesized in infected cells ends up in virions.</text>
</comment>
<comment type="similarity">
    <text evidence="4">Belongs to the arteriviridae GP4 protein family.</text>
</comment>
<protein>
    <recommendedName>
        <fullName>Glycoprotein 4</fullName>
        <shortName>Protein GP4</shortName>
    </recommendedName>
</protein>
<accession>A0MD33</accession>
<feature type="signal peptide" evidence="2">
    <location>
        <begin position="1"/>
        <end position="22"/>
    </location>
</feature>
<feature type="chain" id="PRO_0000410889" description="Glycoprotein 4">
    <location>
        <begin position="23"/>
        <end position="183"/>
    </location>
</feature>
<feature type="topological domain" description="Virion surface" evidence="2">
    <location>
        <begin position="23"/>
        <end position="160"/>
    </location>
</feature>
<feature type="transmembrane region" description="Helical" evidence="2">
    <location>
        <begin position="161"/>
        <end position="181"/>
    </location>
</feature>
<feature type="topological domain" description="Intravirion" evidence="2">
    <location>
        <begin position="182"/>
        <end position="183"/>
    </location>
</feature>
<feature type="glycosylation site" description="N-linked (GlcNAc...) asparagine; by host" evidence="2">
    <location>
        <position position="37"/>
    </location>
</feature>
<feature type="glycosylation site" description="N-linked (GlcNAc...) asparagine; by host" evidence="2">
    <location>
        <position position="51"/>
    </location>
</feature>
<feature type="glycosylation site" description="N-linked (GlcNAc...) asparagine; by host" evidence="2">
    <location>
        <position position="88"/>
    </location>
</feature>
<feature type="glycosylation site" description="N-linked (GlcNAc...) asparagine; by host" evidence="2">
    <location>
        <position position="124"/>
    </location>
</feature>
<feature type="glycosylation site" description="N-linked (GlcNAc...) asparagine; by host" evidence="2">
    <location>
        <position position="134"/>
    </location>
</feature>
<evidence type="ECO:0000250" key="1"/>
<evidence type="ECO:0000255" key="2"/>
<evidence type="ECO:0000269" key="3">
    <source>
    </source>
</evidence>
<evidence type="ECO:0000305" key="4"/>